<gene>
    <name evidence="1" type="primary">moaC</name>
    <name type="ordered locus">BCB4264_A4835</name>
</gene>
<sequence length="161" mass="17499">MSSFTHFNDQGRAKMVDISDKKATVRTAIACSSIVVTKEIYDKISHNEIGKGDVLAVAQIAGIMAAKRTSDIIPMCHPLLLKGVDVSFDWKQSEEQYRLLIEVKVKTEGSTGVEMEALTAASATALTVYDMCKAVDKGMIIGETYLLEKTGGKSGDYTRNS</sequence>
<accession>B7H782</accession>
<reference key="1">
    <citation type="submission" date="2008-10" db="EMBL/GenBank/DDBJ databases">
        <title>Genome sequence of Bacillus cereus B4264.</title>
        <authorList>
            <person name="Dodson R.J."/>
            <person name="Durkin A.S."/>
            <person name="Rosovitz M.J."/>
            <person name="Rasko D.A."/>
            <person name="Hoffmaster A."/>
            <person name="Ravel J."/>
            <person name="Sutton G."/>
        </authorList>
    </citation>
    <scope>NUCLEOTIDE SEQUENCE [LARGE SCALE GENOMIC DNA]</scope>
    <source>
        <strain>B4264</strain>
    </source>
</reference>
<comment type="function">
    <text evidence="1">Catalyzes the conversion of (8S)-3',8-cyclo-7,8-dihydroguanosine 5'-triphosphate to cyclic pyranopterin monophosphate (cPMP).</text>
</comment>
<comment type="catalytic activity">
    <reaction evidence="1">
        <text>(8S)-3',8-cyclo-7,8-dihydroguanosine 5'-triphosphate = cyclic pyranopterin phosphate + diphosphate</text>
        <dbReference type="Rhea" id="RHEA:49580"/>
        <dbReference type="ChEBI" id="CHEBI:33019"/>
        <dbReference type="ChEBI" id="CHEBI:59648"/>
        <dbReference type="ChEBI" id="CHEBI:131766"/>
        <dbReference type="EC" id="4.6.1.17"/>
    </reaction>
</comment>
<comment type="pathway">
    <text evidence="1">Cofactor biosynthesis; molybdopterin biosynthesis.</text>
</comment>
<comment type="subunit">
    <text evidence="1">Homohexamer; trimer of dimers.</text>
</comment>
<comment type="similarity">
    <text evidence="1">Belongs to the MoaC family.</text>
</comment>
<protein>
    <recommendedName>
        <fullName evidence="1">Cyclic pyranopterin monophosphate synthase</fullName>
        <ecNumber evidence="1">4.6.1.17</ecNumber>
    </recommendedName>
    <alternativeName>
        <fullName evidence="1">Molybdenum cofactor biosynthesis protein C</fullName>
    </alternativeName>
</protein>
<feature type="chain" id="PRO_1000139244" description="Cyclic pyranopterin monophosphate synthase">
    <location>
        <begin position="1"/>
        <end position="161"/>
    </location>
</feature>
<feature type="active site" evidence="1">
    <location>
        <position position="130"/>
    </location>
</feature>
<feature type="binding site" evidence="1">
    <location>
        <begin position="75"/>
        <end position="77"/>
    </location>
    <ligand>
        <name>substrate</name>
    </ligand>
</feature>
<feature type="binding site" evidence="1">
    <location>
        <begin position="115"/>
        <end position="116"/>
    </location>
    <ligand>
        <name>substrate</name>
    </ligand>
</feature>
<evidence type="ECO:0000255" key="1">
    <source>
        <dbReference type="HAMAP-Rule" id="MF_01224"/>
    </source>
</evidence>
<name>MOAC_BACC4</name>
<keyword id="KW-0456">Lyase</keyword>
<keyword id="KW-0501">Molybdenum cofactor biosynthesis</keyword>
<dbReference type="EC" id="4.6.1.17" evidence="1"/>
<dbReference type="EMBL" id="CP001176">
    <property type="protein sequence ID" value="ACK60346.1"/>
    <property type="molecule type" value="Genomic_DNA"/>
</dbReference>
<dbReference type="RefSeq" id="WP_000094146.1">
    <property type="nucleotide sequence ID" value="NZ_VEHB01000005.1"/>
</dbReference>
<dbReference type="SMR" id="B7H782"/>
<dbReference type="GeneID" id="67469015"/>
<dbReference type="KEGG" id="bcb:BCB4264_A4835"/>
<dbReference type="HOGENOM" id="CLU_074693_1_1_9"/>
<dbReference type="UniPathway" id="UPA00344"/>
<dbReference type="Proteomes" id="UP000007096">
    <property type="component" value="Chromosome"/>
</dbReference>
<dbReference type="GO" id="GO:0061799">
    <property type="term" value="F:cyclic pyranopterin monophosphate synthase activity"/>
    <property type="evidence" value="ECO:0007669"/>
    <property type="project" value="UniProtKB-UniRule"/>
</dbReference>
<dbReference type="GO" id="GO:0006777">
    <property type="term" value="P:Mo-molybdopterin cofactor biosynthetic process"/>
    <property type="evidence" value="ECO:0007669"/>
    <property type="project" value="UniProtKB-UniRule"/>
</dbReference>
<dbReference type="CDD" id="cd01420">
    <property type="entry name" value="MoaC_PE"/>
    <property type="match status" value="1"/>
</dbReference>
<dbReference type="Gene3D" id="3.30.70.640">
    <property type="entry name" value="Molybdopterin cofactor biosynthesis C (MoaC) domain"/>
    <property type="match status" value="1"/>
</dbReference>
<dbReference type="HAMAP" id="MF_01224_B">
    <property type="entry name" value="MoaC_B"/>
    <property type="match status" value="1"/>
</dbReference>
<dbReference type="InterPro" id="IPR023045">
    <property type="entry name" value="MoaC"/>
</dbReference>
<dbReference type="InterPro" id="IPR047594">
    <property type="entry name" value="MoaC_bact/euk"/>
</dbReference>
<dbReference type="InterPro" id="IPR036522">
    <property type="entry name" value="MoaC_sf"/>
</dbReference>
<dbReference type="InterPro" id="IPR050105">
    <property type="entry name" value="MoCo_biosynth_MoaA/MoaC"/>
</dbReference>
<dbReference type="InterPro" id="IPR002820">
    <property type="entry name" value="Mopterin_CF_biosynth-C_dom"/>
</dbReference>
<dbReference type="NCBIfam" id="TIGR00581">
    <property type="entry name" value="moaC"/>
    <property type="match status" value="1"/>
</dbReference>
<dbReference type="NCBIfam" id="NF006870">
    <property type="entry name" value="PRK09364.1"/>
    <property type="match status" value="1"/>
</dbReference>
<dbReference type="PANTHER" id="PTHR22960:SF29">
    <property type="entry name" value="CYCLIC PYRANOPTERIN MONOPHOSPHATE SYNTHASE"/>
    <property type="match status" value="1"/>
</dbReference>
<dbReference type="PANTHER" id="PTHR22960">
    <property type="entry name" value="MOLYBDOPTERIN COFACTOR SYNTHESIS PROTEIN A"/>
    <property type="match status" value="1"/>
</dbReference>
<dbReference type="Pfam" id="PF01967">
    <property type="entry name" value="MoaC"/>
    <property type="match status" value="1"/>
</dbReference>
<dbReference type="SUPFAM" id="SSF55040">
    <property type="entry name" value="Molybdenum cofactor biosynthesis protein C, MoaC"/>
    <property type="match status" value="1"/>
</dbReference>
<proteinExistence type="inferred from homology"/>
<organism>
    <name type="scientific">Bacillus cereus (strain B4264)</name>
    <dbReference type="NCBI Taxonomy" id="405532"/>
    <lineage>
        <taxon>Bacteria</taxon>
        <taxon>Bacillati</taxon>
        <taxon>Bacillota</taxon>
        <taxon>Bacilli</taxon>
        <taxon>Bacillales</taxon>
        <taxon>Bacillaceae</taxon>
        <taxon>Bacillus</taxon>
        <taxon>Bacillus cereus group</taxon>
    </lineage>
</organism>